<feature type="chain" id="PRO_0000251137" description="ADP-ribosylation factor-like protein 13B">
    <location>
        <begin position="1"/>
        <end position="428"/>
    </location>
</feature>
<feature type="region of interest" description="Disordered" evidence="4">
    <location>
        <begin position="207"/>
        <end position="287"/>
    </location>
</feature>
<feature type="region of interest" description="Disordered" evidence="4">
    <location>
        <begin position="318"/>
        <end position="428"/>
    </location>
</feature>
<feature type="coiled-coil region" evidence="3">
    <location>
        <begin position="192"/>
        <end position="245"/>
    </location>
</feature>
<feature type="compositionally biased region" description="Basic and acidic residues" evidence="4">
    <location>
        <begin position="207"/>
        <end position="234"/>
    </location>
</feature>
<feature type="compositionally biased region" description="Basic and acidic residues" evidence="4">
    <location>
        <begin position="267"/>
        <end position="287"/>
    </location>
</feature>
<feature type="compositionally biased region" description="Basic and acidic residues" evidence="4">
    <location>
        <begin position="329"/>
        <end position="338"/>
    </location>
</feature>
<feature type="compositionally biased region" description="Basic residues" evidence="4">
    <location>
        <begin position="344"/>
        <end position="357"/>
    </location>
</feature>
<feature type="compositionally biased region" description="Pro residues" evidence="4">
    <location>
        <begin position="371"/>
        <end position="381"/>
    </location>
</feature>
<feature type="compositionally biased region" description="Basic and acidic residues" evidence="4">
    <location>
        <begin position="392"/>
        <end position="407"/>
    </location>
</feature>
<feature type="binding site" evidence="1">
    <location>
        <begin position="28"/>
        <end position="35"/>
    </location>
    <ligand>
        <name>GTP</name>
        <dbReference type="ChEBI" id="CHEBI:37565"/>
    </ligand>
</feature>
<feature type="binding site" evidence="1">
    <location>
        <begin position="71"/>
        <end position="75"/>
    </location>
    <ligand>
        <name>GTP</name>
        <dbReference type="ChEBI" id="CHEBI:37565"/>
    </ligand>
</feature>
<feature type="binding site" evidence="1">
    <location>
        <begin position="130"/>
        <end position="133"/>
    </location>
    <ligand>
        <name>GTP</name>
        <dbReference type="ChEBI" id="CHEBI:37565"/>
    </ligand>
</feature>
<feature type="lipid moiety-binding region" description="S-palmitoyl cysteine" evidence="1">
    <location>
        <position position="8"/>
    </location>
</feature>
<feature type="lipid moiety-binding region" description="S-palmitoyl cysteine" evidence="1">
    <location>
        <position position="9"/>
    </location>
</feature>
<feature type="cross-link" description="Glycyl lysine isopeptide (Lys-Gly) (interchain with G-Cter in SUMO)" evidence="18">
    <location>
        <position position="329"/>
    </location>
</feature>
<feature type="splice variant" id="VSP_045421" description="In isoform 3." evidence="17">
    <location>
        <begin position="1"/>
        <end position="103"/>
    </location>
</feature>
<feature type="splice variant" id="VSP_020733" description="In isoform 2." evidence="16">
    <location>
        <begin position="21"/>
        <end position="127"/>
    </location>
</feature>
<feature type="sequence variant" id="VAR_054371" description="In JBTS8; reduces binding to GTP; dbSNP:rs121912606." evidence="6">
    <original>R</original>
    <variation>Q</variation>
    <location>
        <position position="79"/>
    </location>
</feature>
<feature type="sequence variant" id="VAR_077496" description="In JBTS8; the patient also manifests obesity as a feature; decreased localization to cilium; dbSNP:rs863225430." evidence="14">
    <original>Y</original>
    <variation>C</variation>
    <location>
        <position position="86"/>
    </location>
</feature>
<feature type="sequence variant" id="VAR_089244" description="In JBTS8; likely pathogenic; leads to reduction in ciliary length; reduces cilium trafficking of INPP5E." evidence="15">
    <original>V</original>
    <variation>A</variation>
    <location>
        <position position="143"/>
    </location>
</feature>
<feature type="sequence variant" id="VAR_089245" description="In JBTS8; likely pathogenic; reduces cilium trafficking of INPP5E." evidence="15">
    <original>W</original>
    <variation>G</variation>
    <location>
        <position position="185"/>
    </location>
</feature>
<feature type="sequence variant" id="VAR_054372" description="In JBTS8; dbSNP:rs121912608." evidence="6">
    <original>R</original>
    <variation>C</variation>
    <location>
        <position position="200"/>
    </location>
</feature>
<feature type="sequence variant" id="VAR_048319" description="In dbSNP:rs33944211.">
    <original>T</original>
    <variation>S</variation>
    <location>
        <position position="348"/>
    </location>
</feature>
<feature type="sequence variant" id="VAR_069190" description="In a nephronophthisis (NPHP) patient." evidence="8">
    <original>R</original>
    <variation>L</variation>
    <location>
        <position position="390"/>
    </location>
</feature>
<feature type="mutagenesis site" description="Does not affect localization to cilia." evidence="5">
    <original>T</original>
    <variation>N</variation>
    <location>
        <position position="35"/>
    </location>
</feature>
<feature type="mutagenesis site" description="Does not affect localization to cilia." evidence="5">
    <original>N</original>
    <variation>I</variation>
    <location>
        <position position="130"/>
    </location>
</feature>
<feature type="mutagenesis site" description="No effect. Abolishes sumoylation; when associated with R-270; R-275; R-276; R-279 and R-329." evidence="9">
    <original>K</original>
    <variation>R</variation>
    <location>
        <position position="231"/>
    </location>
</feature>
<feature type="mutagenesis site" description="No effect. Abolishes sumoylation; when associated with R-231; R-275; R-276; R-279 and R-329." evidence="9">
    <original>K</original>
    <variation>R</variation>
    <location>
        <position position="270"/>
    </location>
</feature>
<feature type="mutagenesis site" description="No effect. Abolishes sumoylation; when associated with R-231; R-270; R-276; R-279 and R-329." evidence="9">
    <original>K</original>
    <variation>R</variation>
    <location>
        <position position="275"/>
    </location>
</feature>
<feature type="mutagenesis site" description="No effect. Abolishes sumoylation; when associated with R-231; R-270; R-275; R-279 and R-329." evidence="9">
    <original>K</original>
    <variation>R</variation>
    <location>
        <position position="276"/>
    </location>
</feature>
<feature type="mutagenesis site" description="No effect. Abolishes sumoylation; when associated with R-231; R-270; R-275; R-276 and R-329." evidence="9">
    <original>K</original>
    <variation>R</variation>
    <location>
        <position position="279"/>
    </location>
</feature>
<feature type="mutagenesis site" description="Abolishes sumoylation. Abolishes sumoylation; when associated with R-231; R-270; R-275; R-276 and R-279." evidence="9">
    <original>K</original>
    <variation>R</variation>
    <location>
        <position position="329"/>
    </location>
</feature>
<feature type="sequence conflict" description="In Ref. 1; CAD28544." evidence="18" ref="1">
    <original>K</original>
    <variation>KK</variation>
    <location>
        <position position="275"/>
    </location>
</feature>
<sequence length="428" mass="48643">MFSLMASCCGWFKRWREPVRKVTLLMVGLDNAGKTATAKGIQGEYPEDVAPTVGFSKINLRQGKFEVTIFDLGGGIRIRGIWKNYYAESYGVIFVVDSSDEERMEETKEAMSEMLRHPRISGKPILVLANKQDKEGALGEADVIECLSLEKLVNEHKCLCQIEPCSAISGYGKKIDKSIKKGLYWLLHVIARDFDALNERIQKETTEQRALEEQEKQERAERVRKLREERKQNEQEQAELDGTSGLAELDPEPTNPFQPIASVIIENEGKLEREKKNQKMEKDSDGCHLKHKMEHEQIETQGQVNHNGQKNNEFGLVENYKEALTQQLKNEDETDRPSLESANGKKKTKKLRMKRNHRVEPLNIDDCAPESPTPPPPPPPVGWGTPKVTRLPKLEPLGETHHNDFYRKPLPPLAVPQRPNSDAHDVIS</sequence>
<reference key="1">
    <citation type="journal article" date="2007" name="BMC Genomics">
        <title>The full-ORF clone resource of the German cDNA consortium.</title>
        <authorList>
            <person name="Bechtel S."/>
            <person name="Rosenfelder H."/>
            <person name="Duda A."/>
            <person name="Schmidt C.P."/>
            <person name="Ernst U."/>
            <person name="Wellenreuther R."/>
            <person name="Mehrle A."/>
            <person name="Schuster C."/>
            <person name="Bahr A."/>
            <person name="Bloecker H."/>
            <person name="Heubner D."/>
            <person name="Hoerlein A."/>
            <person name="Michel G."/>
            <person name="Wedler H."/>
            <person name="Koehrer K."/>
            <person name="Ottenwaelder B."/>
            <person name="Poustka A."/>
            <person name="Wiemann S."/>
            <person name="Schupp I."/>
        </authorList>
    </citation>
    <scope>NUCLEOTIDE SEQUENCE [LARGE SCALE MRNA] (ISOFORM 3)</scope>
    <source>
        <tissue>Amygdala</tissue>
    </source>
</reference>
<reference key="2">
    <citation type="journal article" date="2006" name="Nature">
        <title>The DNA sequence, annotation and analysis of human chromosome 3.</title>
        <authorList>
            <person name="Muzny D.M."/>
            <person name="Scherer S.E."/>
            <person name="Kaul R."/>
            <person name="Wang J."/>
            <person name="Yu J."/>
            <person name="Sudbrak R."/>
            <person name="Buhay C.J."/>
            <person name="Chen R."/>
            <person name="Cree A."/>
            <person name="Ding Y."/>
            <person name="Dugan-Rocha S."/>
            <person name="Gill R."/>
            <person name="Gunaratne P."/>
            <person name="Harris R.A."/>
            <person name="Hawes A.C."/>
            <person name="Hernandez J."/>
            <person name="Hodgson A.V."/>
            <person name="Hume J."/>
            <person name="Jackson A."/>
            <person name="Khan Z.M."/>
            <person name="Kovar-Smith C."/>
            <person name="Lewis L.R."/>
            <person name="Lozado R.J."/>
            <person name="Metzker M.L."/>
            <person name="Milosavljevic A."/>
            <person name="Miner G.R."/>
            <person name="Morgan M.B."/>
            <person name="Nazareth L.V."/>
            <person name="Scott G."/>
            <person name="Sodergren E."/>
            <person name="Song X.-Z."/>
            <person name="Steffen D."/>
            <person name="Wei S."/>
            <person name="Wheeler D.A."/>
            <person name="Wright M.W."/>
            <person name="Worley K.C."/>
            <person name="Yuan Y."/>
            <person name="Zhang Z."/>
            <person name="Adams C.Q."/>
            <person name="Ansari-Lari M.A."/>
            <person name="Ayele M."/>
            <person name="Brown M.J."/>
            <person name="Chen G."/>
            <person name="Chen Z."/>
            <person name="Clendenning J."/>
            <person name="Clerc-Blankenburg K.P."/>
            <person name="Chen R."/>
            <person name="Chen Z."/>
            <person name="Davis C."/>
            <person name="Delgado O."/>
            <person name="Dinh H.H."/>
            <person name="Dong W."/>
            <person name="Draper H."/>
            <person name="Ernst S."/>
            <person name="Fu G."/>
            <person name="Gonzalez-Garay M.L."/>
            <person name="Garcia D.K."/>
            <person name="Gillett W."/>
            <person name="Gu J."/>
            <person name="Hao B."/>
            <person name="Haugen E."/>
            <person name="Havlak P."/>
            <person name="He X."/>
            <person name="Hennig S."/>
            <person name="Hu S."/>
            <person name="Huang W."/>
            <person name="Jackson L.R."/>
            <person name="Jacob L.S."/>
            <person name="Kelly S.H."/>
            <person name="Kube M."/>
            <person name="Levy R."/>
            <person name="Li Z."/>
            <person name="Liu B."/>
            <person name="Liu J."/>
            <person name="Liu W."/>
            <person name="Lu J."/>
            <person name="Maheshwari M."/>
            <person name="Nguyen B.-V."/>
            <person name="Okwuonu G.O."/>
            <person name="Palmeiri A."/>
            <person name="Pasternak S."/>
            <person name="Perez L.M."/>
            <person name="Phelps K.A."/>
            <person name="Plopper F.J."/>
            <person name="Qiang B."/>
            <person name="Raymond C."/>
            <person name="Rodriguez R."/>
            <person name="Saenphimmachak C."/>
            <person name="Santibanez J."/>
            <person name="Shen H."/>
            <person name="Shen Y."/>
            <person name="Subramanian S."/>
            <person name="Tabor P.E."/>
            <person name="Verduzco D."/>
            <person name="Waldron L."/>
            <person name="Wang J."/>
            <person name="Wang J."/>
            <person name="Wang Q."/>
            <person name="Williams G.A."/>
            <person name="Wong G.K.-S."/>
            <person name="Yao Z."/>
            <person name="Zhang J."/>
            <person name="Zhang X."/>
            <person name="Zhao G."/>
            <person name="Zhou J."/>
            <person name="Zhou Y."/>
            <person name="Nelson D."/>
            <person name="Lehrach H."/>
            <person name="Reinhardt R."/>
            <person name="Naylor S.L."/>
            <person name="Yang H."/>
            <person name="Olson M."/>
            <person name="Weinstock G."/>
            <person name="Gibbs R.A."/>
        </authorList>
    </citation>
    <scope>NUCLEOTIDE SEQUENCE [LARGE SCALE GENOMIC DNA]</scope>
</reference>
<reference key="3">
    <citation type="submission" date="2005-09" db="EMBL/GenBank/DDBJ databases">
        <authorList>
            <person name="Mural R.J."/>
            <person name="Istrail S."/>
            <person name="Sutton G.G."/>
            <person name="Florea L."/>
            <person name="Halpern A.L."/>
            <person name="Mobarry C.M."/>
            <person name="Lippert R."/>
            <person name="Walenz B."/>
            <person name="Shatkay H."/>
            <person name="Dew I."/>
            <person name="Miller J.R."/>
            <person name="Flanigan M.J."/>
            <person name="Edwards N.J."/>
            <person name="Bolanos R."/>
            <person name="Fasulo D."/>
            <person name="Halldorsson B.V."/>
            <person name="Hannenhalli S."/>
            <person name="Turner R."/>
            <person name="Yooseph S."/>
            <person name="Lu F."/>
            <person name="Nusskern D.R."/>
            <person name="Shue B.C."/>
            <person name="Zheng X.H."/>
            <person name="Zhong F."/>
            <person name="Delcher A.L."/>
            <person name="Huson D.H."/>
            <person name="Kravitz S.A."/>
            <person name="Mouchard L."/>
            <person name="Reinert K."/>
            <person name="Remington K.A."/>
            <person name="Clark A.G."/>
            <person name="Waterman M.S."/>
            <person name="Eichler E.E."/>
            <person name="Adams M.D."/>
            <person name="Hunkapiller M.W."/>
            <person name="Myers E.W."/>
            <person name="Venter J.C."/>
        </authorList>
    </citation>
    <scope>NUCLEOTIDE SEQUENCE [LARGE SCALE GENOMIC DNA]</scope>
</reference>
<reference key="4">
    <citation type="journal article" date="2004" name="Genome Res.">
        <title>The status, quality, and expansion of the NIH full-length cDNA project: the Mammalian Gene Collection (MGC).</title>
        <authorList>
            <consortium name="The MGC Project Team"/>
        </authorList>
    </citation>
    <scope>NUCLEOTIDE SEQUENCE [LARGE SCALE MRNA] (ISOFORMS 1 AND 2)</scope>
    <source>
        <tissue>Brain</tissue>
    </source>
</reference>
<reference key="5">
    <citation type="journal article" date="2004" name="Nat. Genet.">
        <title>Mutations in a member of the Ras superfamily of small GTP-binding proteins causes Bardet-Biedl syndrome.</title>
        <authorList>
            <person name="Fan Y."/>
            <person name="Esmail M.A."/>
            <person name="Ansley S.J."/>
            <person name="Blacque O.E."/>
            <person name="Boroevich K."/>
            <person name="Ross A.J."/>
            <person name="Moore S.J."/>
            <person name="Badano J.L."/>
            <person name="May-Simera H."/>
            <person name="Compton D.S."/>
            <person name="Green J.S."/>
            <person name="Lewis R.A."/>
            <person name="van Haelst M.M."/>
            <person name="Parfrey P.S."/>
            <person name="Baillie D.L."/>
            <person name="Beales P.L."/>
            <person name="Katsanis N."/>
            <person name="Davidson W.S."/>
            <person name="Leroux M.R."/>
        </authorList>
    </citation>
    <scope>IDENTIFICATION</scope>
</reference>
<reference key="6">
    <citation type="journal article" date="2008" name="Biochem. Biophys. Res. Commun.">
        <title>Domain architecture of the atypical Arf-family GTPase Arl13b involved in cilia formation.</title>
        <authorList>
            <person name="Hori Y."/>
            <person name="Kobayashi T."/>
            <person name="Kikko Y."/>
            <person name="Kontani K."/>
            <person name="Katada T."/>
        </authorList>
    </citation>
    <scope>SUBCELLULAR LOCATION</scope>
    <scope>GTP-BINDING</scope>
    <scope>MUTAGENESIS OF THR-35 AND ASN-130</scope>
</reference>
<reference key="7">
    <citation type="journal article" date="2010" name="Dev. Cell">
        <title>Pitchfork regulates primary cilia disassembly and left-right asymmetry.</title>
        <authorList>
            <person name="Kinzel D."/>
            <person name="Boldt K."/>
            <person name="Davis E.E."/>
            <person name="Burtscher I."/>
            <person name="Trumbach D."/>
            <person name="Diplas B."/>
            <person name="Attie-Bitach T."/>
            <person name="Wurst W."/>
            <person name="Katsanis N."/>
            <person name="Ueffing M."/>
            <person name="Lickert H."/>
        </authorList>
    </citation>
    <scope>INTERACTION WITH CIMAP3</scope>
</reference>
<reference key="8">
    <citation type="journal article" date="2012" name="J. Cell Biol.">
        <title>SUMOylation of the small GTPase ARL-13 promotes ciliary targeting of sensory receptors.</title>
        <authorList>
            <person name="Li Y."/>
            <person name="Zhang Q."/>
            <person name="Wei Q."/>
            <person name="Zhang Y."/>
            <person name="Ling K."/>
            <person name="Hu J."/>
        </authorList>
    </citation>
    <scope>SUMOYLATION AT LYS-329</scope>
    <scope>MUTAGENESIS OF LYS-231; LYS-270; LYS-275; LYS-276; LYS-279 AND LYS-329</scope>
</reference>
<reference key="9">
    <citation type="journal article" date="2013" name="PLoS Genet.">
        <title>Active transport and diffusion barriers restrict Joubert syndrome-associated ARL13B/ARL-13 to an inv-like ciliary membrane subdomain.</title>
        <authorList>
            <person name="Cevik S."/>
            <person name="Sanders A.A."/>
            <person name="Van Wijk E."/>
            <person name="Boldt K."/>
            <person name="Clarke L."/>
            <person name="van Reeuwijk J."/>
            <person name="Hori Y."/>
            <person name="Horn N."/>
            <person name="Hetterschijt L."/>
            <person name="Wdowicz A."/>
            <person name="Mullins A."/>
            <person name="Kida K."/>
            <person name="Kaplan O.I."/>
            <person name="van Beersum S.E."/>
            <person name="Man Wu K."/>
            <person name="Letteboer S.J."/>
            <person name="Mans D.A."/>
            <person name="Katada T."/>
            <person name="Kontani K."/>
            <person name="Ueffing M."/>
            <person name="Roepman R."/>
            <person name="Kremer H."/>
            <person name="Blacque O.E."/>
        </authorList>
    </citation>
    <scope>INTERACTION WITH IFT46 AND IFT74</scope>
</reference>
<reference key="10">
    <citation type="journal article" date="2012" name="Proc. Natl. Acad. Sci. U.S.A.">
        <title>ARL13B, PDE6D, and CEP164 form a functional network for INPP5E ciliary targeting.</title>
        <authorList>
            <person name="Humbert M.C."/>
            <person name="Weihbrecht K."/>
            <person name="Searby C.C."/>
            <person name="Li Y."/>
            <person name="Pope R.M."/>
            <person name="Sheffield V.C."/>
            <person name="Seo S."/>
        </authorList>
    </citation>
    <scope>FUNCTION</scope>
</reference>
<reference key="11">
    <citation type="journal article" date="2012" name="Proc. Natl. Acad. Sci. U.S.A.">
        <title>Arl13b regulates endocytic recycling traffic.</title>
        <authorList>
            <person name="Barral D.C."/>
            <person name="Garg S."/>
            <person name="Casalou C."/>
            <person name="Watts G.F."/>
            <person name="Sandoval J.L."/>
            <person name="Ramalho J.S."/>
            <person name="Hsu V.W."/>
            <person name="Brenner M.B."/>
        </authorList>
    </citation>
    <scope>FUNCTION</scope>
    <scope>SUBUNIT</scope>
    <scope>SUBCELLULAR LOCATION</scope>
    <scope>DOMAIN</scope>
</reference>
<reference key="12">
    <citation type="journal article" date="2013" name="Cell">
        <title>Asymmetric inheritance of centrosome-associated primary cilium membrane directs ciliogenesis after cell division.</title>
        <authorList>
            <person name="Paridaen J.T."/>
            <person name="Wilsch-Brauninger M."/>
            <person name="Huttner W.B."/>
        </authorList>
    </citation>
    <scope>SUBCELLULAR LOCATION</scope>
</reference>
<reference key="13">
    <citation type="journal article" date="2015" name="Eur. J. Hum. Genet.">
        <title>Identification of a novel ARL13B variant in a Joubert syndrome-affected patient with retinal impairment and obesity.</title>
        <authorList>
            <person name="Thomas S."/>
            <person name="Cantagrel V."/>
            <person name="Mariani L."/>
            <person name="Serre V."/>
            <person name="Lee J.E."/>
            <person name="Elkhartoufi N."/>
            <person name="de Lonlay P."/>
            <person name="Desguerre I."/>
            <person name="Munnich A."/>
            <person name="Boddaert N."/>
            <person name="Lyonnet S."/>
            <person name="Vekemans M."/>
            <person name="Lisgo S.N."/>
            <person name="Caspary T."/>
            <person name="Gleeson J."/>
            <person name="Attie-Bitach T."/>
        </authorList>
    </citation>
    <scope>INVOLVEMENT IN JBTS8</scope>
    <scope>TISSUE SPECIFICITY</scope>
    <scope>SUBCELLULAR LOCATION</scope>
    <scope>VARIANT JBTS8 CYS-86</scope>
    <scope>CHARACTERIZATION OF VARIANT JBTS8 CYS-86</scope>
</reference>
<reference key="14">
    <citation type="journal article" date="2008" name="Am. J. Hum. Genet.">
        <title>Mutations in the cilia gene ARL13B lead to the classical form of Joubert syndrome.</title>
        <authorList>
            <consortium name="The international Joubert syndrome related disorders (JSRD) study group"/>
            <person name="Cantagrel V."/>
            <person name="Silhavy J.L."/>
            <person name="Bielas S.L."/>
            <person name="Swistun D."/>
            <person name="Marsh S.E."/>
            <person name="Bertrand J.Y."/>
            <person name="Audollent S."/>
            <person name="Attie-Bitach T."/>
            <person name="Holden K.R."/>
            <person name="Dobyns W.B."/>
            <person name="Traver D."/>
            <person name="Al-Gazali L."/>
            <person name="Ali B.R."/>
            <person name="Lindner T.H."/>
            <person name="Caspary T."/>
            <person name="Otto E.A."/>
            <person name="Hildebrandt F."/>
            <person name="Glass I.A."/>
            <person name="Logan C.V."/>
            <person name="Johnson C.A."/>
            <person name="Bennett C."/>
            <person name="Brancati F."/>
            <person name="Valente E.M."/>
            <person name="Woods C.G."/>
            <person name="Gleeson J.G."/>
        </authorList>
    </citation>
    <scope>VARIANTS JBTS8 GLN-79 AND CYS-200</scope>
    <scope>CHARACTERIZATION OF VARIANT JBTS8 GLN-79</scope>
</reference>
<reference key="15">
    <citation type="journal article" date="2011" name="J. Med. Genet.">
        <title>Mutation analysis of 18 nephronophthisis associated ciliopathy disease genes using a DNA pooling and next generation sequencing strategy.</title>
        <authorList>
            <person name="Otto E.A."/>
            <person name="Ramaswami G."/>
            <person name="Janssen S."/>
            <person name="Chaki M."/>
            <person name="Allen S.J."/>
            <person name="Zhou W."/>
            <person name="Airik R."/>
            <person name="Hurd T.W."/>
            <person name="Ghosh A.K."/>
            <person name="Wolf M.T."/>
            <person name="Hoppe B."/>
            <person name="Neuhaus T.J."/>
            <person name="Bockenhauer D."/>
            <person name="Milford D.V."/>
            <person name="Soliman N.A."/>
            <person name="Antignac C."/>
            <person name="Saunier S."/>
            <person name="Johnson C.A."/>
            <person name="Hildebrandt F."/>
        </authorList>
    </citation>
    <scope>VARIANT LEU-390</scope>
</reference>
<reference key="16">
    <citation type="journal article" date="2024" name="J. Cell. Physiol.">
        <title>Novel compound heterozygous variants in ARL13B lead to Joubert syndrome.</title>
        <authorList>
            <person name="Lin Z."/>
            <person name="Shen Y."/>
            <person name="Li Y."/>
            <person name="Lu C."/>
            <person name="Zhu Y."/>
            <person name="He R."/>
            <person name="Cao Z."/>
            <person name="Yin Z."/>
            <person name="Gao H."/>
            <person name="Guo B."/>
            <person name="Ma X."/>
            <person name="Cao M."/>
            <person name="Luo M."/>
        </authorList>
    </citation>
    <scope>FUNCTION</scope>
    <scope>SUBCELLULAR LOCATION</scope>
    <scope>VARIANTS JBTS8 ALA-143 AND GLY-185</scope>
</reference>
<proteinExistence type="evidence at protein level"/>
<evidence type="ECO:0000250" key="1"/>
<evidence type="ECO:0000250" key="2">
    <source>
        <dbReference type="UniProtKB" id="Q640N2"/>
    </source>
</evidence>
<evidence type="ECO:0000255" key="3"/>
<evidence type="ECO:0000256" key="4">
    <source>
        <dbReference type="SAM" id="MobiDB-lite"/>
    </source>
</evidence>
<evidence type="ECO:0000269" key="5">
    <source>
    </source>
</evidence>
<evidence type="ECO:0000269" key="6">
    <source>
    </source>
</evidence>
<evidence type="ECO:0000269" key="7">
    <source>
    </source>
</evidence>
<evidence type="ECO:0000269" key="8">
    <source>
    </source>
</evidence>
<evidence type="ECO:0000269" key="9">
    <source>
    </source>
</evidence>
<evidence type="ECO:0000269" key="10">
    <source>
    </source>
</evidence>
<evidence type="ECO:0000269" key="11">
    <source>
    </source>
</evidence>
<evidence type="ECO:0000269" key="12">
    <source>
    </source>
</evidence>
<evidence type="ECO:0000269" key="13">
    <source>
    </source>
</evidence>
<evidence type="ECO:0000269" key="14">
    <source>
    </source>
</evidence>
<evidence type="ECO:0000269" key="15">
    <source>
    </source>
</evidence>
<evidence type="ECO:0000303" key="16">
    <source>
    </source>
</evidence>
<evidence type="ECO:0000303" key="17">
    <source>
    </source>
</evidence>
<evidence type="ECO:0000305" key="18"/>
<evidence type="ECO:0000305" key="19">
    <source>
    </source>
</evidence>
<organism>
    <name type="scientific">Homo sapiens</name>
    <name type="common">Human</name>
    <dbReference type="NCBI Taxonomy" id="9606"/>
    <lineage>
        <taxon>Eukaryota</taxon>
        <taxon>Metazoa</taxon>
        <taxon>Chordata</taxon>
        <taxon>Craniata</taxon>
        <taxon>Vertebrata</taxon>
        <taxon>Euteleostomi</taxon>
        <taxon>Mammalia</taxon>
        <taxon>Eutheria</taxon>
        <taxon>Euarchontoglires</taxon>
        <taxon>Primates</taxon>
        <taxon>Haplorrhini</taxon>
        <taxon>Catarrhini</taxon>
        <taxon>Hominidae</taxon>
        <taxon>Homo</taxon>
    </lineage>
</organism>
<dbReference type="EMBL" id="AL713789">
    <property type="protein sequence ID" value="CAD28544.2"/>
    <property type="molecule type" value="mRNA"/>
</dbReference>
<dbReference type="EMBL" id="AC117474">
    <property type="status" value="NOT_ANNOTATED_CDS"/>
    <property type="molecule type" value="Genomic_DNA"/>
</dbReference>
<dbReference type="EMBL" id="AC130896">
    <property type="status" value="NOT_ANNOTATED_CDS"/>
    <property type="molecule type" value="Genomic_DNA"/>
</dbReference>
<dbReference type="EMBL" id="CH471052">
    <property type="protein sequence ID" value="EAW79897.1"/>
    <property type="molecule type" value="Genomic_DNA"/>
</dbReference>
<dbReference type="EMBL" id="CH471052">
    <property type="protein sequence ID" value="EAW79901.1"/>
    <property type="molecule type" value="Genomic_DNA"/>
</dbReference>
<dbReference type="EMBL" id="CH471052">
    <property type="protein sequence ID" value="EAW79898.1"/>
    <property type="molecule type" value="Genomic_DNA"/>
</dbReference>
<dbReference type="EMBL" id="BC094725">
    <property type="protein sequence ID" value="AAH94725.1"/>
    <property type="molecule type" value="mRNA"/>
</dbReference>
<dbReference type="EMBL" id="BC104035">
    <property type="protein sequence ID" value="AAI04036.1"/>
    <property type="molecule type" value="mRNA"/>
</dbReference>
<dbReference type="EMBL" id="BC104036">
    <property type="protein sequence ID" value="AAI04037.1"/>
    <property type="molecule type" value="mRNA"/>
</dbReference>
<dbReference type="CCDS" id="CCDS2924.1">
    <molecule id="Q3SXY8-2"/>
</dbReference>
<dbReference type="CCDS" id="CCDS2925.1">
    <molecule id="Q3SXY8-1"/>
</dbReference>
<dbReference type="CCDS" id="CCDS54615.1">
    <molecule id="Q3SXY8-3"/>
</dbReference>
<dbReference type="RefSeq" id="NP_001167621.1">
    <molecule id="Q3SXY8-1"/>
    <property type="nucleotide sequence ID" value="NM_001174150.2"/>
</dbReference>
<dbReference type="RefSeq" id="NP_001167622.1">
    <molecule id="Q3SXY8-3"/>
    <property type="nucleotide sequence ID" value="NM_001174151.2"/>
</dbReference>
<dbReference type="RefSeq" id="NP_659433.2">
    <molecule id="Q3SXY8-2"/>
    <property type="nucleotide sequence ID" value="NM_144996.3"/>
</dbReference>
<dbReference type="RefSeq" id="NP_878899.1">
    <molecule id="Q3SXY8-1"/>
    <property type="nucleotide sequence ID" value="NM_182896.3"/>
</dbReference>
<dbReference type="RefSeq" id="XP_016861342.1">
    <molecule id="Q3SXY8-3"/>
    <property type="nucleotide sequence ID" value="XM_017005853.2"/>
</dbReference>
<dbReference type="RefSeq" id="XP_054201600.1">
    <molecule id="Q3SXY8-3"/>
    <property type="nucleotide sequence ID" value="XM_054345625.1"/>
</dbReference>
<dbReference type="SMR" id="Q3SXY8"/>
<dbReference type="BioGRID" id="128353">
    <property type="interactions" value="321"/>
</dbReference>
<dbReference type="FunCoup" id="Q3SXY8">
    <property type="interactions" value="983"/>
</dbReference>
<dbReference type="IntAct" id="Q3SXY8">
    <property type="interactions" value="158"/>
</dbReference>
<dbReference type="MINT" id="Q3SXY8"/>
<dbReference type="STRING" id="9606.ENSP00000377769"/>
<dbReference type="GlyGen" id="Q3SXY8">
    <property type="glycosylation" value="2 sites"/>
</dbReference>
<dbReference type="iPTMnet" id="Q3SXY8"/>
<dbReference type="PhosphoSitePlus" id="Q3SXY8"/>
<dbReference type="SwissPalm" id="Q3SXY8"/>
<dbReference type="BioMuta" id="ARL13B"/>
<dbReference type="DMDM" id="115503786"/>
<dbReference type="jPOST" id="Q3SXY8"/>
<dbReference type="MassIVE" id="Q3SXY8"/>
<dbReference type="PaxDb" id="9606-ENSP00000377769"/>
<dbReference type="PeptideAtlas" id="Q3SXY8"/>
<dbReference type="ProteomicsDB" id="32429"/>
<dbReference type="ProteomicsDB" id="61823">
    <molecule id="Q3SXY8-1"/>
</dbReference>
<dbReference type="ProteomicsDB" id="61824">
    <molecule id="Q3SXY8-2"/>
</dbReference>
<dbReference type="Pumba" id="Q3SXY8"/>
<dbReference type="Antibodypedia" id="32073">
    <property type="antibodies" value="148 antibodies from 30 providers"/>
</dbReference>
<dbReference type="DNASU" id="200894"/>
<dbReference type="Ensembl" id="ENST00000303097.11">
    <molecule id="Q3SXY8-2"/>
    <property type="protein sequence ID" value="ENSP00000306225.7"/>
    <property type="gene ID" value="ENSG00000169379.17"/>
</dbReference>
<dbReference type="Ensembl" id="ENST00000394222.8">
    <molecule id="Q3SXY8-1"/>
    <property type="protein sequence ID" value="ENSP00000377769.3"/>
    <property type="gene ID" value="ENSG00000169379.17"/>
</dbReference>
<dbReference type="Ensembl" id="ENST00000471138.5">
    <molecule id="Q3SXY8-1"/>
    <property type="protein sequence ID" value="ENSP00000420780.1"/>
    <property type="gene ID" value="ENSG00000169379.17"/>
</dbReference>
<dbReference type="Ensembl" id="ENST00000535334.5">
    <molecule id="Q3SXY8-3"/>
    <property type="protein sequence ID" value="ENSP00000445145.1"/>
    <property type="gene ID" value="ENSG00000169379.17"/>
</dbReference>
<dbReference type="GeneID" id="200894"/>
<dbReference type="KEGG" id="hsa:200894"/>
<dbReference type="MANE-Select" id="ENST00000394222.8">
    <property type="protein sequence ID" value="ENSP00000377769.3"/>
    <property type="RefSeq nucleotide sequence ID" value="NM_001174150.2"/>
    <property type="RefSeq protein sequence ID" value="NP_001167621.1"/>
</dbReference>
<dbReference type="UCSC" id="uc003drc.4">
    <molecule id="Q3SXY8-1"/>
    <property type="organism name" value="human"/>
</dbReference>
<dbReference type="AGR" id="HGNC:25419"/>
<dbReference type="CTD" id="200894"/>
<dbReference type="DisGeNET" id="200894"/>
<dbReference type="GeneCards" id="ARL13B"/>
<dbReference type="GeneReviews" id="ARL13B"/>
<dbReference type="HGNC" id="HGNC:25419">
    <property type="gene designation" value="ARL13B"/>
</dbReference>
<dbReference type="HPA" id="ENSG00000169379">
    <property type="expression patterns" value="Tissue enhanced (retina)"/>
</dbReference>
<dbReference type="MalaCards" id="ARL13B"/>
<dbReference type="MIM" id="608922">
    <property type="type" value="gene"/>
</dbReference>
<dbReference type="MIM" id="612291">
    <property type="type" value="phenotype"/>
</dbReference>
<dbReference type="neXtProt" id="NX_Q3SXY8"/>
<dbReference type="OpenTargets" id="ENSG00000169379"/>
<dbReference type="Orphanet" id="475">
    <property type="disease" value="Joubert syndrome"/>
</dbReference>
<dbReference type="PharmGKB" id="PA134975272"/>
<dbReference type="VEuPathDB" id="HostDB:ENSG00000169379"/>
<dbReference type="eggNOG" id="KOG0074">
    <property type="taxonomic scope" value="Eukaryota"/>
</dbReference>
<dbReference type="eggNOG" id="KOG0076">
    <property type="taxonomic scope" value="Eukaryota"/>
</dbReference>
<dbReference type="GeneTree" id="ENSGT00940000156365"/>
<dbReference type="HOGENOM" id="CLU_040729_3_0_1"/>
<dbReference type="InParanoid" id="Q3SXY8"/>
<dbReference type="OMA" id="QKMEHEQ"/>
<dbReference type="OrthoDB" id="14717at2759"/>
<dbReference type="PAN-GO" id="Q3SXY8">
    <property type="GO annotations" value="5 GO annotations based on evolutionary models"/>
</dbReference>
<dbReference type="PhylomeDB" id="Q3SXY8"/>
<dbReference type="TreeFam" id="TF105476"/>
<dbReference type="PathwayCommons" id="Q3SXY8"/>
<dbReference type="Reactome" id="R-HSA-5624958">
    <property type="pathway name" value="ARL13B-mediated ciliary trafficking of INPP5E"/>
</dbReference>
<dbReference type="Reactome" id="R-HSA-9013406">
    <property type="pathway name" value="RHOQ GTPase cycle"/>
</dbReference>
<dbReference type="Reactome" id="R-HSA-9013409">
    <property type="pathway name" value="RHOJ GTPase cycle"/>
</dbReference>
<dbReference type="Reactome" id="R-HSA-9613829">
    <property type="pathway name" value="Chaperone Mediated Autophagy"/>
</dbReference>
<dbReference type="Reactome" id="R-HSA-9615710">
    <property type="pathway name" value="Late endosomal microautophagy"/>
</dbReference>
<dbReference type="Reactome" id="R-HSA-9646399">
    <property type="pathway name" value="Aggrephagy"/>
</dbReference>
<dbReference type="SignaLink" id="Q3SXY8"/>
<dbReference type="BioGRID-ORCS" id="200894">
    <property type="hits" value="18 hits in 1156 CRISPR screens"/>
</dbReference>
<dbReference type="ChiTaRS" id="ARL13B">
    <property type="organism name" value="human"/>
</dbReference>
<dbReference type="GeneWiki" id="ARL13B"/>
<dbReference type="GenomeRNAi" id="200894"/>
<dbReference type="Pharos" id="Q3SXY8">
    <property type="development level" value="Tbio"/>
</dbReference>
<dbReference type="PRO" id="PR:Q3SXY8"/>
<dbReference type="Proteomes" id="UP000005640">
    <property type="component" value="Chromosome 3"/>
</dbReference>
<dbReference type="RNAct" id="Q3SXY8">
    <property type="molecule type" value="protein"/>
</dbReference>
<dbReference type="Bgee" id="ENSG00000169379">
    <property type="expression patterns" value="Expressed in secondary oocyte and 168 other cell types or tissues"/>
</dbReference>
<dbReference type="ExpressionAtlas" id="Q3SXY8">
    <property type="expression patterns" value="baseline and differential"/>
</dbReference>
<dbReference type="GO" id="GO:0005930">
    <property type="term" value="C:axoneme"/>
    <property type="evidence" value="ECO:0007669"/>
    <property type="project" value="Ensembl"/>
</dbReference>
<dbReference type="GO" id="GO:0036064">
    <property type="term" value="C:ciliary basal body"/>
    <property type="evidence" value="ECO:0000314"/>
    <property type="project" value="HPA"/>
</dbReference>
<dbReference type="GO" id="GO:0060170">
    <property type="term" value="C:ciliary membrane"/>
    <property type="evidence" value="ECO:0000250"/>
    <property type="project" value="UniProtKB"/>
</dbReference>
<dbReference type="GO" id="GO:0005929">
    <property type="term" value="C:cilium"/>
    <property type="evidence" value="ECO:0000314"/>
    <property type="project" value="HPA"/>
</dbReference>
<dbReference type="GO" id="GO:0005829">
    <property type="term" value="C:cytosol"/>
    <property type="evidence" value="ECO:0000314"/>
    <property type="project" value="HPA"/>
</dbReference>
<dbReference type="GO" id="GO:0045171">
    <property type="term" value="C:intercellular bridge"/>
    <property type="evidence" value="ECO:0000314"/>
    <property type="project" value="HPA"/>
</dbReference>
<dbReference type="GO" id="GO:0015630">
    <property type="term" value="C:microtubule cytoskeleton"/>
    <property type="evidence" value="ECO:0000314"/>
    <property type="project" value="HPA"/>
</dbReference>
<dbReference type="GO" id="GO:0031514">
    <property type="term" value="C:motile cilium"/>
    <property type="evidence" value="ECO:0000318"/>
    <property type="project" value="GO_Central"/>
</dbReference>
<dbReference type="GO" id="GO:0097730">
    <property type="term" value="C:non-motile cilium"/>
    <property type="evidence" value="ECO:0000318"/>
    <property type="project" value="GO_Central"/>
</dbReference>
<dbReference type="GO" id="GO:0005525">
    <property type="term" value="F:GTP binding"/>
    <property type="evidence" value="ECO:0007669"/>
    <property type="project" value="UniProtKB-KW"/>
</dbReference>
<dbReference type="GO" id="GO:0003924">
    <property type="term" value="F:GTPase activity"/>
    <property type="evidence" value="ECO:0007669"/>
    <property type="project" value="InterPro"/>
</dbReference>
<dbReference type="GO" id="GO:0060271">
    <property type="term" value="P:cilium assembly"/>
    <property type="evidence" value="ECO:0000250"/>
    <property type="project" value="UniProtKB"/>
</dbReference>
<dbReference type="GO" id="GO:0009953">
    <property type="term" value="P:dorsal/ventral pattern formation"/>
    <property type="evidence" value="ECO:0007669"/>
    <property type="project" value="Ensembl"/>
</dbReference>
<dbReference type="GO" id="GO:0021943">
    <property type="term" value="P:formation of radial glial scaffolds"/>
    <property type="evidence" value="ECO:0000250"/>
    <property type="project" value="UniProtKB"/>
</dbReference>
<dbReference type="GO" id="GO:0001947">
    <property type="term" value="P:heart looping"/>
    <property type="evidence" value="ECO:0007669"/>
    <property type="project" value="Ensembl"/>
</dbReference>
<dbReference type="GO" id="GO:0021830">
    <property type="term" value="P:interneuron migration from the subpallium to the cortex"/>
    <property type="evidence" value="ECO:0000250"/>
    <property type="project" value="UniProtKB"/>
</dbReference>
<dbReference type="GO" id="GO:0070986">
    <property type="term" value="P:left/right axis specification"/>
    <property type="evidence" value="ECO:0007669"/>
    <property type="project" value="Ensembl"/>
</dbReference>
<dbReference type="GO" id="GO:0021532">
    <property type="term" value="P:neural tube patterning"/>
    <property type="evidence" value="ECO:0000250"/>
    <property type="project" value="UniProtKB"/>
</dbReference>
<dbReference type="GO" id="GO:1905515">
    <property type="term" value="P:non-motile cilium assembly"/>
    <property type="evidence" value="ECO:0000250"/>
    <property type="project" value="UniProtKB"/>
</dbReference>
<dbReference type="GO" id="GO:0097500">
    <property type="term" value="P:receptor localization to non-motile cilium"/>
    <property type="evidence" value="ECO:0000318"/>
    <property type="project" value="GO_Central"/>
</dbReference>
<dbReference type="GO" id="GO:0007224">
    <property type="term" value="P:smoothened signaling pathway"/>
    <property type="evidence" value="ECO:0000250"/>
    <property type="project" value="UniProtKB"/>
</dbReference>
<dbReference type="CDD" id="cd04161">
    <property type="entry name" value="Arl2l1_Arl13_like"/>
    <property type="match status" value="1"/>
</dbReference>
<dbReference type="FunFam" id="3.40.50.300:FF:000415">
    <property type="entry name" value="ADP-ribosylation factor-like GTPase 13B"/>
    <property type="match status" value="1"/>
</dbReference>
<dbReference type="Gene3D" id="3.40.50.300">
    <property type="entry name" value="P-loop containing nucleotide triphosphate hydrolases"/>
    <property type="match status" value="1"/>
</dbReference>
<dbReference type="InterPro" id="IPR051995">
    <property type="entry name" value="Ciliary_GTPase"/>
</dbReference>
<dbReference type="InterPro" id="IPR027417">
    <property type="entry name" value="P-loop_NTPase"/>
</dbReference>
<dbReference type="InterPro" id="IPR005225">
    <property type="entry name" value="Small_GTP-bd"/>
</dbReference>
<dbReference type="InterPro" id="IPR006689">
    <property type="entry name" value="Small_GTPase_ARF/SAR"/>
</dbReference>
<dbReference type="NCBIfam" id="TIGR00231">
    <property type="entry name" value="small_GTP"/>
    <property type="match status" value="1"/>
</dbReference>
<dbReference type="PANTHER" id="PTHR46090">
    <property type="entry name" value="ADP-RIBOSYLATION FACTOR-LIKE PROTEIN 13B"/>
    <property type="match status" value="1"/>
</dbReference>
<dbReference type="PANTHER" id="PTHR46090:SF3">
    <property type="entry name" value="ADP-RIBOSYLATION FACTOR-LIKE PROTEIN 13B"/>
    <property type="match status" value="1"/>
</dbReference>
<dbReference type="Pfam" id="PF00025">
    <property type="entry name" value="Arf"/>
    <property type="match status" value="1"/>
</dbReference>
<dbReference type="PRINTS" id="PR00328">
    <property type="entry name" value="SAR1GTPBP"/>
</dbReference>
<dbReference type="SMART" id="SM00177">
    <property type="entry name" value="ARF"/>
    <property type="match status" value="1"/>
</dbReference>
<dbReference type="SMART" id="SM00178">
    <property type="entry name" value="SAR"/>
    <property type="match status" value="1"/>
</dbReference>
<dbReference type="SUPFAM" id="SSF52540">
    <property type="entry name" value="P-loop containing nucleoside triphosphate hydrolases"/>
    <property type="match status" value="1"/>
</dbReference>
<dbReference type="PROSITE" id="PS51417">
    <property type="entry name" value="ARF"/>
    <property type="match status" value="1"/>
</dbReference>
<gene>
    <name type="primary">ARL13B</name>
    <name type="synonym">ARL2L1</name>
</gene>
<protein>
    <recommendedName>
        <fullName>ADP-ribosylation factor-like protein 13B</fullName>
    </recommendedName>
    <alternativeName>
        <fullName>ADP-ribosylation factor-like protein 2-like 1</fullName>
        <shortName>ARL2-like protein 1</shortName>
    </alternativeName>
</protein>
<name>AR13B_HUMAN</name>
<accession>Q3SXY8</accession>
<accession>D3DN29</accession>
<accession>G3V1S8</accession>
<accession>Q504W8</accession>
<accession>Q8TCL5</accession>
<keyword id="KW-0025">Alternative splicing</keyword>
<keyword id="KW-1003">Cell membrane</keyword>
<keyword id="KW-0966">Cell projection</keyword>
<keyword id="KW-1186">Ciliopathy</keyword>
<keyword id="KW-0969">Cilium</keyword>
<keyword id="KW-0175">Coiled coil</keyword>
<keyword id="KW-0963">Cytoplasm</keyword>
<keyword id="KW-0206">Cytoskeleton</keyword>
<keyword id="KW-0225">Disease variant</keyword>
<keyword id="KW-0342">GTP-binding</keyword>
<keyword id="KW-1017">Isopeptide bond</keyword>
<keyword id="KW-0979">Joubert syndrome</keyword>
<keyword id="KW-0449">Lipoprotein</keyword>
<keyword id="KW-0472">Membrane</keyword>
<keyword id="KW-0547">Nucleotide-binding</keyword>
<keyword id="KW-0564">Palmitate</keyword>
<keyword id="KW-1267">Proteomics identification</keyword>
<keyword id="KW-1185">Reference proteome</keyword>
<keyword id="KW-0832">Ubl conjugation</keyword>
<comment type="function">
    <text evidence="10 11 15">Cilium-specific protein required to control the microtubule-based, ciliary axoneme structure. May act by maintaining the association between IFT subcomplexes A and B. Binds GTP but is not able to hydrolyze fit; the GTPase activity remains unclear. Required to pattern the neural tube. Involved in cerebral cortex development: required for the initial formation of a polarized radial glial scaffold, the first step in the construction of the cerebral cortex, by regulating ciliary signaling. Regulates the migration and placement of postmitotic interneurons in the developing cerebral cortex. Plays a role in ciliar trafficking of phosphatidylinositol phosphatase INPP5E in ciliogenesis (PubMed:38219074). May regulate ARF6- and RAB22A-dependent endocytic recycling traffic (PubMed:23223633).</text>
</comment>
<comment type="subunit">
    <text evidence="2 7 11 13">Monomer (By similarity). Interacts with CIMAP3. Interacts with IFT complex B components IFT46 and IFT74 (By similarity) (PubMed:20643351, PubMed:24339792). Interacts with EXOC2; regulates ARL13B localization to the cilium membrane. Interacts with actin; the interaction mediates colocalization of ARL13B and microtubules (PubMed:23223633).</text>
</comment>
<comment type="interaction">
    <interactant intactId="EBI-11343438">
        <id>Q3SXY8</id>
    </interactant>
    <interactant intactId="EBI-2876502">
        <id>Q96CM8</id>
        <label>ACSF2</label>
    </interactant>
    <organismsDiffer>false</organismsDiffer>
    <experiments>3</experiments>
</comment>
<comment type="interaction">
    <interactant intactId="EBI-11343438">
        <id>Q3SXY8</id>
    </interactant>
    <interactant intactId="EBI-11957045">
        <id>Q9NVV5-2</id>
        <label>AIG1</label>
    </interactant>
    <organismsDiffer>false</organismsDiffer>
    <experiments>3</experiments>
</comment>
<comment type="interaction">
    <interactant intactId="EBI-11343438">
        <id>Q3SXY8</id>
    </interactant>
    <interactant intactId="EBI-2848814">
        <id>Q92685</id>
        <label>ALG3</label>
    </interactant>
    <organismsDiffer>false</organismsDiffer>
    <experiments>3</experiments>
</comment>
<comment type="interaction">
    <interactant intactId="EBI-11343438">
        <id>Q3SXY8</id>
    </interactant>
    <interactant intactId="EBI-12109402">
        <id>Q86W74-2</id>
        <label>ANKRD46</label>
    </interactant>
    <organismsDiffer>false</organismsDiffer>
    <experiments>3</experiments>
</comment>
<comment type="interaction">
    <interactant intactId="EBI-11343438">
        <id>Q3SXY8</id>
    </interactant>
    <interactant intactId="EBI-3921628">
        <id>Q16853</id>
        <label>AOC3</label>
    </interactant>
    <organismsDiffer>false</organismsDiffer>
    <experiments>3</experiments>
</comment>
<comment type="interaction">
    <interactant intactId="EBI-11343438">
        <id>Q3SXY8</id>
    </interactant>
    <interactant intactId="EBI-12820279">
        <id>Q96PS8</id>
        <label>AQP10</label>
    </interactant>
    <organismsDiffer>false</organismsDiffer>
    <experiments>3</experiments>
</comment>
<comment type="interaction">
    <interactant intactId="EBI-11343438">
        <id>Q3SXY8</id>
    </interactant>
    <interactant intactId="EBI-1042940">
        <id>Q8NHY0</id>
        <label>B4GALNT2</label>
    </interactant>
    <organismsDiffer>false</organismsDiffer>
    <experiments>3</experiments>
</comment>
<comment type="interaction">
    <interactant intactId="EBI-11343438">
        <id>Q3SXY8</id>
    </interactant>
    <interactant intactId="EBI-3922513">
        <id>O95393</id>
        <label>BMP10</label>
    </interactant>
    <organismsDiffer>false</organismsDiffer>
    <experiments>3</experiments>
</comment>
<comment type="interaction">
    <interactant intactId="EBI-11343438">
        <id>Q3SXY8</id>
    </interactant>
    <interactant intactId="EBI-749464">
        <id>Q12983</id>
        <label>BNIP3</label>
    </interactant>
    <organismsDiffer>false</organismsDiffer>
    <experiments>3</experiments>
</comment>
<comment type="interaction">
    <interactant intactId="EBI-11343438">
        <id>Q3SXY8</id>
    </interactant>
    <interactant intactId="EBI-12244618">
        <id>Q6PL45-2</id>
        <label>BRICD5</label>
    </interactant>
    <organismsDiffer>false</organismsDiffer>
    <experiments>3</experiments>
</comment>
<comment type="interaction">
    <interactant intactId="EBI-11343438">
        <id>Q3SXY8</id>
    </interactant>
    <interactant intactId="EBI-12822627">
        <id>O14523</id>
        <label>C2CD2L</label>
    </interactant>
    <organismsDiffer>false</organismsDiffer>
    <experiments>3</experiments>
</comment>
<comment type="interaction">
    <interactant intactId="EBI-11343438">
        <id>Q3SXY8</id>
    </interactant>
    <interactant intactId="EBI-12003442">
        <id>Q8WVX3-2</id>
        <label>C4orf3</label>
    </interactant>
    <organismsDiffer>false</organismsDiffer>
    <experiments>3</experiments>
</comment>
<comment type="interaction">
    <interactant intactId="EBI-11343438">
        <id>Q3SXY8</id>
    </interactant>
    <interactant intactId="EBI-9083477">
        <id>Q9P0B6</id>
        <label>CCDC167</label>
    </interactant>
    <organismsDiffer>false</organismsDiffer>
    <experiments>3</experiments>
</comment>
<comment type="interaction">
    <interactant intactId="EBI-11343438">
        <id>Q3SXY8</id>
    </interactant>
    <interactant intactId="EBI-2873970">
        <id>P13236</id>
        <label>CCL4</label>
    </interactant>
    <organismsDiffer>false</organismsDiffer>
    <experiments>3</experiments>
</comment>
<comment type="interaction">
    <interactant intactId="EBI-11343438">
        <id>Q3SXY8</id>
    </interactant>
    <interactant intactId="EBI-10271156">
        <id>Q8NHW4</id>
        <label>CCL4L2</label>
    </interactant>
    <organismsDiffer>false</organismsDiffer>
    <experiments>3</experiments>
</comment>
<comment type="interaction">
    <interactant intactId="EBI-11343438">
        <id>Q3SXY8</id>
    </interactant>
    <interactant intactId="EBI-10210332">
        <id>P48509</id>
        <label>CD151</label>
    </interactant>
    <organismsDiffer>false</organismsDiffer>
    <experiments>3</experiments>
</comment>
<comment type="interaction">
    <interactant intactId="EBI-11343438">
        <id>Q3SXY8</id>
    </interactant>
    <interactant intactId="EBI-14259393">
        <id>Q8IX05</id>
        <label>CD302</label>
    </interactant>
    <organismsDiffer>false</organismsDiffer>
    <experiments>3</experiments>
</comment>
<comment type="interaction">
    <interactant intactId="EBI-11343438">
        <id>Q3SXY8</id>
    </interactant>
    <interactant intactId="EBI-6657396">
        <id>P19397</id>
        <label>CD53</label>
    </interactant>
    <organismsDiffer>false</organismsDiffer>
    <experiments>3</experiments>
</comment>
<comment type="interaction">
    <interactant intactId="EBI-11343438">
        <id>Q3SXY8</id>
    </interactant>
    <interactant intactId="EBI-358858">
        <id>O14735</id>
        <label>CDIPT</label>
    </interactant>
    <organismsDiffer>false</organismsDiffer>
    <experiments>3</experiments>
</comment>
<comment type="interaction">
    <interactant intactId="EBI-11343438">
        <id>Q3SXY8</id>
    </interactant>
    <interactant intactId="EBI-11579371">
        <id>Q9BXR6</id>
        <label>CFHR5</label>
    </interactant>
    <organismsDiffer>false</organismsDiffer>
    <experiments>3</experiments>
</comment>
<comment type="interaction">
    <interactant intactId="EBI-11343438">
        <id>Q3SXY8</id>
    </interactant>
    <interactant intactId="EBI-9316372">
        <id>O14493</id>
        <label>CLDN4</label>
    </interactant>
    <organismsDiffer>false</organismsDiffer>
    <experiments>3</experiments>
</comment>
<comment type="interaction">
    <interactant intactId="EBI-11343438">
        <id>Q3SXY8</id>
    </interactant>
    <interactant intactId="EBI-10215641">
        <id>P56748</id>
        <label>CLDN8</label>
    </interactant>
    <organismsDiffer>false</organismsDiffer>
    <experiments>3</experiments>
</comment>
<comment type="interaction">
    <interactant intactId="EBI-11343438">
        <id>Q3SXY8</id>
    </interactant>
    <interactant intactId="EBI-2114729">
        <id>Q6UXB4</id>
        <label>CLEC4G</label>
    </interactant>
    <organismsDiffer>false</organismsDiffer>
    <experiments>3</experiments>
</comment>
<comment type="interaction">
    <interactant intactId="EBI-11343438">
        <id>Q3SXY8</id>
    </interactant>
    <interactant intactId="EBI-11989440">
        <id>Q9BXN2-6</id>
        <label>CLEC7A</label>
    </interactant>
    <organismsDiffer>false</organismsDiffer>
    <experiments>3</experiments>
</comment>
<comment type="interaction">
    <interactant intactId="EBI-11343438">
        <id>Q3SXY8</id>
    </interactant>
    <interactant intactId="EBI-6165897">
        <id>Q9NWW5</id>
        <label>CLN6</label>
    </interactant>
    <organismsDiffer>false</organismsDiffer>
    <experiments>3</experiments>
</comment>
<comment type="interaction">
    <interactant intactId="EBI-11343438">
        <id>Q3SXY8</id>
    </interactant>
    <interactant intactId="EBI-7247651">
        <id>Q96MX0</id>
        <label>CMTM3</label>
    </interactant>
    <organismsDiffer>false</organismsDiffer>
    <experiments>3</experiments>
</comment>
<comment type="interaction">
    <interactant intactId="EBI-11343438">
        <id>Q3SXY8</id>
    </interactant>
    <interactant intactId="EBI-2807956">
        <id>Q96FZ5</id>
        <label>CMTM7</label>
    </interactant>
    <organismsDiffer>false</organismsDiffer>
    <experiments>3</experiments>
</comment>
<comment type="interaction">
    <interactant intactId="EBI-11343438">
        <id>Q3SXY8</id>
    </interactant>
    <interactant intactId="EBI-10241815">
        <id>Q4VAQ0</id>
        <label>COL8A2</label>
    </interactant>
    <organismsDiffer>false</organismsDiffer>
    <experiments>3</experiments>
</comment>
<comment type="interaction">
    <interactant intactId="EBI-11343438">
        <id>Q3SXY8</id>
    </interactant>
    <interactant intactId="EBI-10267100">
        <id>Q8N6G5</id>
        <label>CSGALNACT2</label>
    </interactant>
    <organismsDiffer>false</organismsDiffer>
    <experiments>3</experiments>
</comment>
<comment type="interaction">
    <interactant intactId="EBI-11343438">
        <id>Q3SXY8</id>
    </interactant>
    <interactant intactId="EBI-717654">
        <id>O14569</id>
        <label>CYB561D2</label>
    </interactant>
    <organismsDiffer>false</organismsDiffer>
    <experiments>3</experiments>
</comment>
<comment type="interaction">
    <interactant intactId="EBI-11343438">
        <id>Q3SXY8</id>
    </interactant>
    <interactant intactId="EBI-3915253">
        <id>Q15125</id>
        <label>EBP</label>
    </interactant>
    <organismsDiffer>false</organismsDiffer>
    <experiments>3</experiments>
</comment>
<comment type="interaction">
    <interactant intactId="EBI-11343438">
        <id>Q3SXY8</id>
    </interactant>
    <interactant intactId="EBI-4319440">
        <id>P54849</id>
        <label>EMP1</label>
    </interactant>
    <organismsDiffer>false</organismsDiffer>
    <experiments>3</experiments>
</comment>
<comment type="interaction">
    <interactant intactId="EBI-11343438">
        <id>Q3SXY8</id>
    </interactant>
    <interactant intactId="EBI-12279764">
        <id>O75355-2</id>
        <label>ENTPD3</label>
    </interactant>
    <organismsDiffer>false</organismsDiffer>
    <experiments>3</experiments>
</comment>
<comment type="interaction">
    <interactant intactId="EBI-11343438">
        <id>Q3SXY8</id>
    </interactant>
    <interactant intactId="EBI-12142299">
        <id>Q96IV6</id>
        <label>FAXDC2</label>
    </interactant>
    <organismsDiffer>false</organismsDiffer>
    <experiments>3</experiments>
</comment>
<comment type="interaction">
    <interactant intactId="EBI-11343438">
        <id>Q3SXY8</id>
    </interactant>
    <interactant intactId="EBI-714550">
        <id>P37268</id>
        <label>FDFT1</label>
    </interactant>
    <organismsDiffer>false</organismsDiffer>
    <experiments>3</experiments>
</comment>
<comment type="interaction">
    <interactant intactId="EBI-11343438">
        <id>Q3SXY8</id>
    </interactant>
    <interactant intactId="EBI-724839">
        <id>Q14318</id>
        <label>FKBP8</label>
    </interactant>
    <organismsDiffer>false</organismsDiffer>
    <experiments>3</experiments>
</comment>
<comment type="interaction">
    <interactant intactId="EBI-11343438">
        <id>Q3SXY8</id>
    </interactant>
    <interactant intactId="EBI-714482">
        <id>Q9BWH2</id>
        <label>FUNDC2</label>
    </interactant>
    <organismsDiffer>false</organismsDiffer>
    <experiments>3</experiments>
</comment>
<comment type="interaction">
    <interactant intactId="EBI-11343438">
        <id>Q3SXY8</id>
    </interactant>
    <interactant intactId="EBI-713304">
        <id>Q9H0Q3</id>
        <label>FXYD6</label>
    </interactant>
    <organismsDiffer>false</organismsDiffer>
    <experiments>3</experiments>
</comment>
<comment type="interaction">
    <interactant intactId="EBI-11343438">
        <id>Q3SXY8</id>
    </interactant>
    <interactant intactId="EBI-9304251">
        <id>Q05329</id>
        <label>GAD2</label>
    </interactant>
    <organismsDiffer>false</organismsDiffer>
    <experiments>3</experiments>
</comment>
<comment type="interaction">
    <interactant intactId="EBI-11343438">
        <id>Q3SXY8</id>
    </interactant>
    <interactant intactId="EBI-11991950">
        <id>Q8WWP7</id>
        <label>GIMAP1</label>
    </interactant>
    <organismsDiffer>false</organismsDiffer>
    <experiments>3</experiments>
</comment>
<comment type="interaction">
    <interactant intactId="EBI-11343438">
        <id>Q3SXY8</id>
    </interactant>
    <interactant intactId="EBI-6166686">
        <id>Q96F15</id>
        <label>GIMAP5</label>
    </interactant>
    <organismsDiffer>false</organismsDiffer>
    <experiments>3</experiments>
</comment>
<comment type="interaction">
    <interactant intactId="EBI-11343438">
        <id>Q3SXY8</id>
    </interactant>
    <interactant intactId="EBI-3905204">
        <id>P29033</id>
        <label>GJB2</label>
    </interactant>
    <organismsDiffer>false</organismsDiffer>
    <experiments>3</experiments>
</comment>
<comment type="interaction">
    <interactant intactId="EBI-11343438">
        <id>Q3SXY8</id>
    </interactant>
    <interactant intactId="EBI-4401517">
        <id>O14653</id>
        <label>GOSR2</label>
    </interactant>
    <organismsDiffer>false</organismsDiffer>
    <experiments>3</experiments>
</comment>
<comment type="interaction">
    <interactant intactId="EBI-11343438">
        <id>Q3SXY8</id>
    </interactant>
    <interactant intactId="EBI-2927498">
        <id>O60883</id>
        <label>GPR37L1</label>
    </interactant>
    <organismsDiffer>false</organismsDiffer>
    <experiments>3</experiments>
</comment>
<comment type="interaction">
    <interactant intactId="EBI-11343438">
        <id>Q3SXY8</id>
    </interactant>
    <interactant intactId="EBI-2806151">
        <id>P09601</id>
        <label>HMOX1</label>
    </interactant>
    <organismsDiffer>false</organismsDiffer>
    <experiments>3</experiments>
</comment>
<comment type="interaction">
    <interactant intactId="EBI-11343438">
        <id>Q3SXY8</id>
    </interactant>
    <interactant intactId="EBI-712096">
        <id>P30519</id>
        <label>HMOX2</label>
    </interactant>
    <organismsDiffer>false</organismsDiffer>
    <experiments>3</experiments>
</comment>
<comment type="interaction">
    <interactant intactId="EBI-11343438">
        <id>Q3SXY8</id>
    </interactant>
    <interactant intactId="EBI-748420">
        <id>Q9NSC5</id>
        <label>HOMER3</label>
    </interactant>
    <organismsDiffer>false</organismsDiffer>
    <experiments>3</experiments>
</comment>
<comment type="interaction">
    <interactant intactId="EBI-11343438">
        <id>Q3SXY8</id>
    </interactant>
    <interactant intactId="EBI-11721771">
        <id>O60725</id>
        <label>ICMT</label>
    </interactant>
    <organismsDiffer>false</organismsDiffer>
    <experiments>3</experiments>
</comment>
<comment type="interaction">
    <interactant intactId="EBI-11343438">
        <id>Q3SXY8</id>
    </interactant>
    <interactant intactId="EBI-2568251">
        <id>P11215</id>
        <label>ITGAM</label>
    </interactant>
    <organismsDiffer>false</organismsDiffer>
    <experiments>3</experiments>
</comment>
<comment type="interaction">
    <interactant intactId="EBI-11343438">
        <id>Q3SXY8</id>
    </interactant>
    <interactant intactId="EBI-10266796">
        <id>Q8N5M9</id>
        <label>JAGN1</label>
    </interactant>
    <organismsDiffer>false</organismsDiffer>
    <experiments>3</experiments>
</comment>
<comment type="interaction">
    <interactant intactId="EBI-11343438">
        <id>Q3SXY8</id>
    </interactant>
    <interactant intactId="EBI-703457">
        <id>P63252</id>
        <label>KCNJ2</label>
    </interactant>
    <organismsDiffer>false</organismsDiffer>
    <experiments>4</experiments>
</comment>
<comment type="interaction">
    <interactant intactId="EBI-11343438">
        <id>Q3SXY8</id>
    </interactant>
    <interactant intactId="EBI-750770">
        <id>Q96E93</id>
        <label>KLRG1</label>
    </interactant>
    <organismsDiffer>false</organismsDiffer>
    <experiments>3</experiments>
</comment>
<comment type="interaction">
    <interactant intactId="EBI-11343438">
        <id>Q3SXY8</id>
    </interactant>
    <interactant intactId="EBI-750776">
        <id>O95214</id>
        <label>LEPROTL1</label>
    </interactant>
    <organismsDiffer>false</organismsDiffer>
    <experiments>3</experiments>
</comment>
<comment type="interaction">
    <interactant intactId="EBI-11343438">
        <id>Q3SXY8</id>
    </interactant>
    <interactant intactId="EBI-12033434">
        <id>Q9UBY5</id>
        <label>LPAR3</label>
    </interactant>
    <organismsDiffer>false</organismsDiffer>
    <experiments>3</experiments>
</comment>
<comment type="interaction">
    <interactant intactId="EBI-11343438">
        <id>Q3SXY8</id>
    </interactant>
    <interactant intactId="EBI-944295">
        <id>Q969L2</id>
        <label>MAL2</label>
    </interactant>
    <organismsDiffer>false</organismsDiffer>
    <experiments>3</experiments>
</comment>
<comment type="interaction">
    <interactant intactId="EBI-11343438">
        <id>Q3SXY8</id>
    </interactant>
    <interactant intactId="EBI-750078">
        <id>Q13021</id>
        <label>MALL</label>
    </interactant>
    <organismsDiffer>false</organismsDiffer>
    <experiments>3</experiments>
</comment>
<comment type="interaction">
    <interactant intactId="EBI-11343438">
        <id>Q3SXY8</id>
    </interactant>
    <interactant intactId="EBI-17873222">
        <id>Q15546</id>
        <label>MMD</label>
    </interactant>
    <organismsDiffer>false</organismsDiffer>
    <experiments>3</experiments>
</comment>
<comment type="interaction">
    <interactant intactId="EBI-11343438">
        <id>Q3SXY8</id>
    </interactant>
    <interactant intactId="EBI-12179105">
        <id>O75425</id>
        <label>MOSPD3</label>
    </interactant>
    <organismsDiffer>false</organismsDiffer>
    <experiments>3</experiments>
</comment>
<comment type="interaction">
    <interactant intactId="EBI-11343438">
        <id>Q3SXY8</id>
    </interactant>
    <interactant intactId="EBI-9056153">
        <id>Q96DR8</id>
        <label>MUCL1</label>
    </interactant>
    <organismsDiffer>false</organismsDiffer>
    <experiments>3</experiments>
</comment>
<comment type="interaction">
    <interactant intactId="EBI-11343438">
        <id>Q3SXY8</id>
    </interactant>
    <interactant intactId="EBI-17641390">
        <id>A6NDP7</id>
        <label>MYADML2</label>
    </interactant>
    <organismsDiffer>false</organismsDiffer>
    <experiments>3</experiments>
</comment>
<comment type="interaction">
    <interactant intactId="EBI-11343438">
        <id>Q3SXY8</id>
    </interactant>
    <interactant intactId="EBI-2863634">
        <id>Q9UHE5</id>
        <label>NAT8</label>
    </interactant>
    <organismsDiffer>false</organismsDiffer>
    <experiments>3</experiments>
</comment>
<comment type="interaction">
    <interactant intactId="EBI-11343438">
        <id>Q3SXY8</id>
    </interactant>
    <interactant intactId="EBI-10317425">
        <id>Q9NZG7</id>
        <label>NINJ2</label>
    </interactant>
    <organismsDiffer>false</organismsDiffer>
    <experiments>3</experiments>
</comment>
<comment type="interaction">
    <interactant intactId="EBI-11343438">
        <id>Q3SXY8</id>
    </interactant>
    <interactant intactId="EBI-3919611">
        <id>Q16617</id>
        <label>NKG7</label>
    </interactant>
    <organismsDiffer>false</organismsDiffer>
    <experiments>3</experiments>
</comment>
<comment type="interaction">
    <interactant intactId="EBI-11343438">
        <id>Q3SXY8</id>
    </interactant>
    <interactant intactId="EBI-10262547">
        <id>Q8IXM6</id>
        <label>NRM</label>
    </interactant>
    <organismsDiffer>false</organismsDiffer>
    <experiments>3</experiments>
</comment>
<comment type="interaction">
    <interactant intactId="EBI-11343438">
        <id>Q3SXY8</id>
    </interactant>
    <interactant intactId="EBI-1054848">
        <id>Q9P0S3</id>
        <label>ORMDL1</label>
    </interactant>
    <organismsDiffer>false</organismsDiffer>
    <experiments>3</experiments>
</comment>
<comment type="interaction">
    <interactant intactId="EBI-11343438">
        <id>Q3SXY8</id>
    </interactant>
    <interactant intactId="EBI-721750">
        <id>Q8N138</id>
        <label>ORMDL3</label>
    </interactant>
    <organismsDiffer>false</organismsDiffer>
    <experiments>3</experiments>
</comment>
<comment type="interaction">
    <interactant intactId="EBI-11343438">
        <id>Q3SXY8</id>
    </interactant>
    <interactant intactId="EBI-465167">
        <id>P09466</id>
        <label>PAEP</label>
    </interactant>
    <organismsDiffer>false</organismsDiffer>
    <experiments>3</experiments>
</comment>
<comment type="interaction">
    <interactant intactId="EBI-11343438">
        <id>Q3SXY8</id>
    </interactant>
    <interactant intactId="EBI-716063">
        <id>Q13113</id>
        <label>PDZK1IP1</label>
    </interactant>
    <organismsDiffer>false</organismsDiffer>
    <experiments>3</experiments>
</comment>
<comment type="interaction">
    <interactant intactId="EBI-11343438">
        <id>Q3SXY8</id>
    </interactant>
    <interactant intactId="EBI-12092917">
        <id>Q9UHJ9-5</id>
        <label>PGAP2</label>
    </interactant>
    <organismsDiffer>false</organismsDiffer>
    <experiments>3</experiments>
</comment>
<comment type="interaction">
    <interactant intactId="EBI-11343438">
        <id>Q3SXY8</id>
    </interactant>
    <interactant intactId="EBI-692836">
        <id>P26678</id>
        <label>PLN</label>
    </interactant>
    <organismsDiffer>false</organismsDiffer>
    <experiments>3</experiments>
</comment>
<comment type="interaction">
    <interactant intactId="EBI-11343438">
        <id>Q3SXY8</id>
    </interactant>
    <interactant intactId="EBI-12188331">
        <id>P60201-2</id>
        <label>PLP1</label>
    </interactant>
    <organismsDiffer>false</organismsDiffer>
    <experiments>3</experiments>
</comment>
<comment type="interaction">
    <interactant intactId="EBI-11343438">
        <id>Q3SXY8</id>
    </interactant>
    <interactant intactId="EBI-10485931">
        <id>Q5VZY2</id>
        <label>PLPP4</label>
    </interactant>
    <organismsDiffer>false</organismsDiffer>
    <experiments>3</experiments>
</comment>
<comment type="interaction">
    <interactant intactId="EBI-11343438">
        <id>Q3SXY8</id>
    </interactant>
    <interactant intactId="EBI-12955265">
        <id>Q96GM1</id>
        <label>PLPPR2</label>
    </interactant>
    <organismsDiffer>false</organismsDiffer>
    <experiments>3</experiments>
</comment>
<comment type="interaction">
    <interactant intactId="EBI-11343438">
        <id>Q3SXY8</id>
    </interactant>
    <interactant intactId="EBI-2845982">
        <id>Q01453</id>
        <label>PMP22</label>
    </interactant>
    <organismsDiffer>false</organismsDiffer>
    <experiments>3</experiments>
</comment>
<comment type="interaction">
    <interactant intactId="EBI-11343438">
        <id>Q3SXY8</id>
    </interactant>
    <interactant intactId="EBI-14210385">
        <id>Q59EV6</id>
        <label>PPGB</label>
    </interactant>
    <organismsDiffer>false</organismsDiffer>
    <experiments>3</experiments>
</comment>
<comment type="interaction">
    <interactant intactId="EBI-11343438">
        <id>Q3SXY8</id>
    </interactant>
    <interactant intactId="EBI-10173935">
        <id>A5D903</id>
        <label>PRB1</label>
    </interactant>
    <organismsDiffer>false</organismsDiffer>
    <experiments>3</experiments>
</comment>
<comment type="interaction">
    <interactant intactId="EBI-11343438">
        <id>Q3SXY8</id>
    </interactant>
    <interactant intactId="EBI-742898">
        <id>P43378</id>
        <label>PTPN9</label>
    </interactant>
    <organismsDiffer>false</organismsDiffer>
    <experiments>3</experiments>
</comment>
<comment type="interaction">
    <interactant intactId="EBI-11343438">
        <id>Q3SXY8</id>
    </interactant>
    <interactant intactId="EBI-10244780">
        <id>Q5QGT7</id>
        <label>RTP2</label>
    </interactant>
    <organismsDiffer>false</organismsDiffer>
    <experiments>3</experiments>
</comment>
<comment type="interaction">
    <interactant intactId="EBI-11343438">
        <id>Q3SXY8</id>
    </interactant>
    <interactant intactId="EBI-752230">
        <id>P29034</id>
        <label>S100A2</label>
    </interactant>
    <organismsDiffer>false</organismsDiffer>
    <experiments>3</experiments>
</comment>
<comment type="interaction">
    <interactant intactId="EBI-11343438">
        <id>Q3SXY8</id>
    </interactant>
    <interactant intactId="EBI-3917235">
        <id>Q9NTJ5</id>
        <label>SACM1L</label>
    </interactant>
    <organismsDiffer>false</organismsDiffer>
    <experiments>3</experiments>
</comment>
<comment type="interaction">
    <interactant intactId="EBI-11343438">
        <id>Q3SXY8</id>
    </interactant>
    <interactant intactId="EBI-12913124">
        <id>Q9NTN9-2</id>
        <label>SEMA4G</label>
    </interactant>
    <organismsDiffer>false</organismsDiffer>
    <experiments>3</experiments>
</comment>
<comment type="interaction">
    <interactant intactId="EBI-11343438">
        <id>Q3SXY8</id>
    </interactant>
    <interactant intactId="EBI-12938720">
        <id>Q8WWT9</id>
        <label>SLC13A3</label>
    </interactant>
    <organismsDiffer>false</organismsDiffer>
    <experiments>3</experiments>
</comment>
<comment type="interaction">
    <interactant intactId="EBI-11343438">
        <id>Q3SXY8</id>
    </interactant>
    <interactant intactId="EBI-2825135">
        <id>P22732</id>
        <label>SLC2A5</label>
    </interactant>
    <organismsDiffer>false</organismsDiffer>
    <experiments>3</experiments>
</comment>
<comment type="interaction">
    <interactant intactId="EBI-11343438">
        <id>Q3SXY8</id>
    </interactant>
    <interactant intactId="EBI-12870360">
        <id>P78382</id>
        <label>SLC35A1</label>
    </interactant>
    <organismsDiffer>false</organismsDiffer>
    <experiments>3</experiments>
</comment>
<comment type="interaction">
    <interactant intactId="EBI-11343438">
        <id>Q3SXY8</id>
    </interactant>
    <interactant intactId="EBI-12147661">
        <id>P78383</id>
        <label>SLC35B1</label>
    </interactant>
    <organismsDiffer>false</organismsDiffer>
    <experiments>3</experiments>
</comment>
<comment type="interaction">
    <interactant intactId="EBI-11343438">
        <id>Q3SXY8</id>
    </interactant>
    <interactant intactId="EBI-10314552">
        <id>Q9NVC3</id>
        <label>SLC38A7</label>
    </interactant>
    <organismsDiffer>false</organismsDiffer>
    <experiments>3</experiments>
</comment>
<comment type="interaction">
    <interactant intactId="EBI-11343438">
        <id>Q3SXY8</id>
    </interactant>
    <interactant intactId="EBI-12898013">
        <id>Q9NP94</id>
        <label>SLC39A2</label>
    </interactant>
    <organismsDiffer>false</organismsDiffer>
    <experiments>3</experiments>
</comment>
<comment type="interaction">
    <interactant intactId="EBI-11343438">
        <id>Q3SXY8</id>
    </interactant>
    <interactant intactId="EBI-10226799">
        <id>Q0VAQ4</id>
        <label>SMAGP</label>
    </interactant>
    <organismsDiffer>false</organismsDiffer>
    <experiments>3</experiments>
</comment>
<comment type="interaction">
    <interactant intactId="EBI-11343438">
        <id>Q3SXY8</id>
    </interactant>
    <interactant intactId="EBI-10049055">
        <id>P16150</id>
        <label>SPN</label>
    </interactant>
    <organismsDiffer>false</organismsDiffer>
    <experiments>3</experiments>
</comment>
<comment type="interaction">
    <interactant intactId="EBI-11343438">
        <id>Q3SXY8</id>
    </interactant>
    <interactant intactId="EBI-12200293">
        <id>P0DN84</id>
        <label>STRIT1</label>
    </interactant>
    <organismsDiffer>false</organismsDiffer>
    <experiments>3</experiments>
</comment>
<comment type="interaction">
    <interactant intactId="EBI-11343438">
        <id>Q3SXY8</id>
    </interactant>
    <interactant intactId="EBI-712466">
        <id>Q16623</id>
        <label>STX1A</label>
    </interactant>
    <organismsDiffer>false</organismsDiffer>
    <experiments>3</experiments>
</comment>
<comment type="interaction">
    <interactant intactId="EBI-11343438">
        <id>Q3SXY8</id>
    </interactant>
    <interactant intactId="EBI-3221827">
        <id>O15400</id>
        <label>STX7</label>
    </interactant>
    <organismsDiffer>false</organismsDiffer>
    <experiments>3</experiments>
</comment>
<comment type="interaction">
    <interactant intactId="EBI-11343438">
        <id>Q3SXY8</id>
    </interactant>
    <interactant intactId="EBI-2877718">
        <id>Q9NZ01</id>
        <label>TECR</label>
    </interactant>
    <organismsDiffer>false</organismsDiffer>
    <experiments>3</experiments>
</comment>
<comment type="interaction">
    <interactant intactId="EBI-11343438">
        <id>Q3SXY8</id>
    </interactant>
    <interactant intactId="EBI-10329860">
        <id>Q9Y6I9</id>
        <label>TEX264</label>
    </interactant>
    <organismsDiffer>false</organismsDiffer>
    <experiments>3</experiments>
</comment>
<comment type="interaction">
    <interactant intactId="EBI-11343438">
        <id>Q3SXY8</id>
    </interactant>
    <interactant intactId="EBI-355727">
        <id>P02786</id>
        <label>TFRC</label>
    </interactant>
    <organismsDiffer>false</organismsDiffer>
    <experiments>3</experiments>
</comment>
<comment type="interaction">
    <interactant intactId="EBI-11343438">
        <id>Q3SXY8</id>
    </interactant>
    <interactant intactId="EBI-310962">
        <id>Q9UPZ6</id>
        <label>THSD7A</label>
    </interactant>
    <organismsDiffer>false</organismsDiffer>
    <experiments>3</experiments>
</comment>
<comment type="interaction">
    <interactant intactId="EBI-11343438">
        <id>Q3SXY8</id>
    </interactant>
    <interactant intactId="EBI-311394">
        <id>Q9C0I4</id>
        <label>THSD7B</label>
    </interactant>
    <organismsDiffer>false</organismsDiffer>
    <experiments>3</experiments>
</comment>
<comment type="interaction">
    <interactant intactId="EBI-11343438">
        <id>Q3SXY8</id>
    </interactant>
    <interactant intactId="EBI-13082040">
        <id>Q9BZW4</id>
        <label>TM6SF2</label>
    </interactant>
    <organismsDiffer>false</organismsDiffer>
    <experiments>3</experiments>
</comment>
<comment type="interaction">
    <interactant intactId="EBI-11343438">
        <id>Q3SXY8</id>
    </interactant>
    <interactant intactId="EBI-723946">
        <id>P17152</id>
        <label>TMEM11</label>
    </interactant>
    <organismsDiffer>false</organismsDiffer>
    <experiments>3</experiments>
</comment>
<comment type="interaction">
    <interactant intactId="EBI-11343438">
        <id>Q3SXY8</id>
    </interactant>
    <interactant intactId="EBI-12155101">
        <id>Q9BTD3</id>
        <label>TMEM121</label>
    </interactant>
    <organismsDiffer>false</organismsDiffer>
    <experiments>3</experiments>
</comment>
<comment type="interaction">
    <interactant intactId="EBI-11343438">
        <id>Q3SXY8</id>
    </interactant>
    <interactant intactId="EBI-10694905">
        <id>Q5BJH2-2</id>
        <label>TMEM128</label>
    </interactant>
    <organismsDiffer>false</organismsDiffer>
    <experiments>3</experiments>
</comment>
<comment type="interaction">
    <interactant intactId="EBI-11343438">
        <id>Q3SXY8</id>
    </interactant>
    <interactant intactId="EBI-2339195">
        <id>Q9P0S9</id>
        <label>TMEM14C</label>
    </interactant>
    <organismsDiffer>false</organismsDiffer>
    <experiments>3</experiments>
</comment>
<comment type="interaction">
    <interactant intactId="EBI-11343438">
        <id>Q3SXY8</id>
    </interactant>
    <interactant intactId="EBI-13046724">
        <id>Q14656</id>
        <label>TMEM187</label>
    </interactant>
    <organismsDiffer>false</organismsDiffer>
    <experiments>3</experiments>
</comment>
<comment type="interaction">
    <interactant intactId="EBI-11343438">
        <id>Q3SXY8</id>
    </interactant>
    <interactant intactId="EBI-10278423">
        <id>Q8WZ59</id>
        <label>TMEM190</label>
    </interactant>
    <organismsDiffer>false</organismsDiffer>
    <experiments>3</experiments>
</comment>
<comment type="interaction">
    <interactant intactId="EBI-11343438">
        <id>Q3SXY8</id>
    </interactant>
    <interactant intactId="EBI-10173151">
        <id>A2RU14</id>
        <label>TMEM218</label>
    </interactant>
    <organismsDiffer>false</organismsDiffer>
    <experiments>3</experiments>
</comment>
<comment type="interaction">
    <interactant intactId="EBI-11343438">
        <id>Q3SXY8</id>
    </interactant>
    <interactant intactId="EBI-12195227">
        <id>Q8NBD8</id>
        <label>TMEM229B</label>
    </interactant>
    <organismsDiffer>false</organismsDiffer>
    <experiments>3</experiments>
</comment>
<comment type="interaction">
    <interactant intactId="EBI-11343438">
        <id>Q3SXY8</id>
    </interactant>
    <interactant intactId="EBI-11956809">
        <id>Q8TBM7</id>
        <label>TMEM254</label>
    </interactant>
    <organismsDiffer>false</organismsDiffer>
    <experiments>3</experiments>
</comment>
<comment type="interaction">
    <interactant intactId="EBI-11343438">
        <id>Q3SXY8</id>
    </interactant>
    <interactant intactId="EBI-721293">
        <id>Q9BTV4</id>
        <label>TMEM43</label>
    </interactant>
    <organismsDiffer>false</organismsDiffer>
    <experiments>3</experiments>
</comment>
<comment type="interaction">
    <interactant intactId="EBI-11343438">
        <id>Q3SXY8</id>
    </interactant>
    <interactant intactId="EBI-3922833">
        <id>Q969K7</id>
        <label>TMEM54</label>
    </interactant>
    <organismsDiffer>false</organismsDiffer>
    <experiments>3</experiments>
</comment>
<comment type="interaction">
    <interactant intactId="EBI-11343438">
        <id>Q3SXY8</id>
    </interactant>
    <interactant intactId="EBI-6656213">
        <id>Q6PI78</id>
        <label>TMEM65</label>
    </interactant>
    <organismsDiffer>false</organismsDiffer>
    <experiments>3</experiments>
</comment>
<comment type="interaction">
    <interactant intactId="EBI-11343438">
        <id>Q3SXY8</id>
    </interactant>
    <interactant intactId="EBI-8649725">
        <id>Q9BSE2</id>
        <label>TMEM79</label>
    </interactant>
    <organismsDiffer>false</organismsDiffer>
    <experiments>3</experiments>
</comment>
<comment type="interaction">
    <interactant intactId="EBI-11343438">
        <id>Q3SXY8</id>
    </interactant>
    <interactant intactId="EBI-2548832">
        <id>Q8N661</id>
        <label>TMEM86B</label>
    </interactant>
    <organismsDiffer>false</organismsDiffer>
    <experiments>3</experiments>
</comment>
<comment type="interaction">
    <interactant intactId="EBI-11343438">
        <id>Q3SXY8</id>
    </interactant>
    <interactant intactId="EBI-12111910">
        <id>Q5BJF2</id>
        <label>TMEM97</label>
    </interactant>
    <organismsDiffer>false</organismsDiffer>
    <experiments>3</experiments>
</comment>
<comment type="interaction">
    <interactant intactId="EBI-11343438">
        <id>Q3SXY8</id>
    </interactant>
    <interactant intactId="EBI-2820477">
        <id>Q71RG4</id>
        <label>TMUB2</label>
    </interactant>
    <organismsDiffer>false</organismsDiffer>
    <experiments>3</experiments>
</comment>
<comment type="interaction">
    <interactant intactId="EBI-11343438">
        <id>Q3SXY8</id>
    </interactant>
    <interactant intactId="EBI-717441">
        <id>O14798</id>
        <label>TNFRSF10C</label>
    </interactant>
    <organismsDiffer>false</organismsDiffer>
    <experiments>3</experiments>
</comment>
<comment type="interaction">
    <interactant intactId="EBI-11343438">
        <id>Q3SXY8</id>
    </interactant>
    <interactant intactId="EBI-12003398">
        <id>Q9H2S6-2</id>
        <label>TNMD</label>
    </interactant>
    <organismsDiffer>false</organismsDiffer>
    <experiments>3</experiments>
</comment>
<comment type="interaction">
    <interactant intactId="EBI-11343438">
        <id>Q3SXY8</id>
    </interactant>
    <interactant intactId="EBI-12195249">
        <id>Q5TGU0</id>
        <label>TSPO2</label>
    </interactant>
    <organismsDiffer>false</organismsDiffer>
    <experiments>3</experiments>
</comment>
<comment type="interaction">
    <interactant intactId="EBI-11343438">
        <id>Q3SXY8</id>
    </interactant>
    <interactant intactId="EBI-11988865">
        <id>A5PKU2</id>
        <label>TUSC5</label>
    </interactant>
    <organismsDiffer>false</organismsDiffer>
    <experiments>3</experiments>
</comment>
<comment type="interaction">
    <interactant intactId="EBI-11343438">
        <id>Q3SXY8</id>
    </interactant>
    <interactant intactId="EBI-12097582">
        <id>P23763-3</id>
        <label>VAMP1</label>
    </interactant>
    <organismsDiffer>false</organismsDiffer>
    <experiments>3</experiments>
</comment>
<comment type="interaction">
    <interactant intactId="EBI-11343438">
        <id>Q3SXY8</id>
    </interactant>
    <interactant intactId="EBI-520113">
        <id>P63027</id>
        <label>VAMP2</label>
    </interactant>
    <organismsDiffer>false</organismsDiffer>
    <experiments>3</experiments>
</comment>
<comment type="interaction">
    <interactant intactId="EBI-11343438">
        <id>Q3SXY8</id>
    </interactant>
    <interactant intactId="EBI-722343">
        <id>Q15836</id>
        <label>VAMP3</label>
    </interactant>
    <organismsDiffer>false</organismsDiffer>
    <experiments>3</experiments>
</comment>
<comment type="interaction">
    <interactant intactId="EBI-11343438">
        <id>Q3SXY8</id>
    </interactant>
    <interactant intactId="EBI-744953">
        <id>O75379</id>
        <label>VAMP4</label>
    </interactant>
    <organismsDiffer>false</organismsDiffer>
    <experiments>3</experiments>
</comment>
<comment type="interaction">
    <interactant intactId="EBI-11343438">
        <id>Q3SXY8</id>
    </interactant>
    <interactant intactId="EBI-12190699">
        <id>Q6UX27-3</id>
        <label>VSTM1</label>
    </interactant>
    <organismsDiffer>false</organismsDiffer>
    <experiments>3</experiments>
</comment>
<comment type="interaction">
    <interactant intactId="EBI-11343438">
        <id>Q3SXY8</id>
    </interactant>
    <interactant intactId="EBI-723529">
        <id>Q14508</id>
        <label>WFDC2</label>
    </interactant>
    <organismsDiffer>false</organismsDiffer>
    <experiments>3</experiments>
</comment>
<comment type="interaction">
    <interactant intactId="EBI-11343438">
        <id>Q3SXY8</id>
    </interactant>
    <interactant intactId="EBI-751210">
        <id>Q96EC8</id>
        <label>YIPF6</label>
    </interactant>
    <organismsDiffer>false</organismsDiffer>
    <experiments>3</experiments>
</comment>
<comment type="interaction">
    <interactant intactId="EBI-11343438">
        <id>Q3SXY8</id>
    </interactant>
    <interactant intactId="EBI-12837904">
        <id>Q96MV8</id>
        <label>ZDHHC15</label>
    </interactant>
    <organismsDiffer>false</organismsDiffer>
    <experiments>3</experiments>
</comment>
<comment type="subcellular location">
    <subcellularLocation>
        <location evidence="5 12">Cell projection</location>
        <location evidence="5 12">Cilium membrane</location>
        <topology evidence="5 12">Lipid-anchor</topology>
    </subcellularLocation>
    <subcellularLocation>
        <location evidence="14 15">Cell projection</location>
        <location evidence="14 15">Cilium</location>
    </subcellularLocation>
    <subcellularLocation>
        <location evidence="11">Cell membrane</location>
    </subcellularLocation>
    <subcellularLocation>
        <location evidence="11">Cytoplasm</location>
        <location evidence="11">Cytoskeleton</location>
    </subcellularLocation>
    <text evidence="11 14 15">Associates with the cilium membrane via palmitoylation. Localizes to proximal ciliary membranes, to an inversin-like subciliary membrane compartment, excluding the transition zone (PubMed:25138100, PubMed:38219074). Colocalizes with microtubules (PubMed:23223633).</text>
</comment>
<comment type="alternative products">
    <event type="alternative splicing"/>
    <isoform>
        <id>Q3SXY8-1</id>
        <name>1</name>
        <sequence type="displayed"/>
    </isoform>
    <isoform>
        <id>Q3SXY8-2</id>
        <name>2</name>
        <sequence type="described" ref="VSP_020733"/>
    </isoform>
    <isoform>
        <id>Q3SXY8-3</id>
        <name>3</name>
        <sequence type="described" ref="VSP_045421"/>
    </isoform>
</comment>
<comment type="tissue specificity">
    <text evidence="14">Expressed in the developing brain.</text>
</comment>
<comment type="domain">
    <text evidence="11">The C-terminal domain is required for localization to microtubules and the cell membrane.</text>
</comment>
<comment type="PTM">
    <text evidence="9">Sumoylation is required for PKD2 entry into cilium.</text>
</comment>
<comment type="disease" evidence="6 14 15">
    <disease id="DI-00611">
        <name>Joubert syndrome 8</name>
        <acronym>JBTS8</acronym>
        <description>A disorder presenting with cerebellar ataxia, oculomotor apraxia, hypotonia, neonatal breathing abnormalities and psychomotor delay. Neuroradiologically, it is characterized by cerebellar vermian hypoplasia/aplasia, thickened and reoriented superior cerebellar peduncles, and an abnormally large interpeduncular fossa, giving the appearance of a molar tooth on transaxial slices (molar tooth sign). Additional variable features include retinal dystrophy and renal disease.</description>
        <dbReference type="MIM" id="612291"/>
    </disease>
    <text>The disease is caused by variants affecting the gene represented in this entry.</text>
</comment>
<comment type="miscellaneous">
    <text>Used as a ciliary marker because of its specific localization to microtubule doublets of the ciliary axoneme.</text>
</comment>
<comment type="similarity">
    <text evidence="18">Belongs to the small GTPase superfamily. Arf family.</text>
</comment>
<comment type="caution">
    <text evidence="19">Was initially thought to form a homodimer (PubMed:18554500). However, 3D structure of C.reinhardtii ortholog showed that it is probably not the case.</text>
</comment>